<evidence type="ECO:0000255" key="1">
    <source>
        <dbReference type="HAMAP-Rule" id="MF_00321"/>
    </source>
</evidence>
<comment type="function">
    <text evidence="1">Necessary for normal cell division and for the maintenance of normal septation.</text>
</comment>
<comment type="cofactor">
    <cofactor evidence="1">
        <name>Mg(2+)</name>
        <dbReference type="ChEBI" id="CHEBI:18420"/>
    </cofactor>
</comment>
<comment type="similarity">
    <text evidence="1">Belongs to the TRAFAC class TrmE-Era-EngA-EngB-Septin-like GTPase superfamily. EngB GTPase family.</text>
</comment>
<dbReference type="EMBL" id="AL596169">
    <property type="protein sequence ID" value="CAC96824.1"/>
    <property type="molecule type" value="Genomic_DNA"/>
</dbReference>
<dbReference type="PIR" id="AH1631">
    <property type="entry name" value="AH1631"/>
</dbReference>
<dbReference type="RefSeq" id="WP_003762435.1">
    <property type="nucleotide sequence ID" value="NC_003212.1"/>
</dbReference>
<dbReference type="SMR" id="Q92BF6"/>
<dbReference type="STRING" id="272626.gene:17565924"/>
<dbReference type="GeneID" id="93234975"/>
<dbReference type="KEGG" id="lin:lin1593"/>
<dbReference type="eggNOG" id="COG0218">
    <property type="taxonomic scope" value="Bacteria"/>
</dbReference>
<dbReference type="HOGENOM" id="CLU_033732_3_0_9"/>
<dbReference type="OrthoDB" id="9804921at2"/>
<dbReference type="Proteomes" id="UP000002513">
    <property type="component" value="Chromosome"/>
</dbReference>
<dbReference type="GO" id="GO:0005829">
    <property type="term" value="C:cytosol"/>
    <property type="evidence" value="ECO:0007669"/>
    <property type="project" value="TreeGrafter"/>
</dbReference>
<dbReference type="GO" id="GO:0005525">
    <property type="term" value="F:GTP binding"/>
    <property type="evidence" value="ECO:0007669"/>
    <property type="project" value="UniProtKB-UniRule"/>
</dbReference>
<dbReference type="GO" id="GO:0046872">
    <property type="term" value="F:metal ion binding"/>
    <property type="evidence" value="ECO:0007669"/>
    <property type="project" value="UniProtKB-KW"/>
</dbReference>
<dbReference type="GO" id="GO:0000917">
    <property type="term" value="P:division septum assembly"/>
    <property type="evidence" value="ECO:0007669"/>
    <property type="project" value="UniProtKB-KW"/>
</dbReference>
<dbReference type="CDD" id="cd01876">
    <property type="entry name" value="YihA_EngB"/>
    <property type="match status" value="1"/>
</dbReference>
<dbReference type="FunFam" id="3.40.50.300:FF:000098">
    <property type="entry name" value="Probable GTP-binding protein EngB"/>
    <property type="match status" value="1"/>
</dbReference>
<dbReference type="Gene3D" id="3.40.50.300">
    <property type="entry name" value="P-loop containing nucleotide triphosphate hydrolases"/>
    <property type="match status" value="1"/>
</dbReference>
<dbReference type="HAMAP" id="MF_00321">
    <property type="entry name" value="GTPase_EngB"/>
    <property type="match status" value="1"/>
</dbReference>
<dbReference type="InterPro" id="IPR030393">
    <property type="entry name" value="G_ENGB_dom"/>
</dbReference>
<dbReference type="InterPro" id="IPR006073">
    <property type="entry name" value="GTP-bd"/>
</dbReference>
<dbReference type="InterPro" id="IPR019987">
    <property type="entry name" value="GTP-bd_ribosome_bio_YsxC"/>
</dbReference>
<dbReference type="InterPro" id="IPR027417">
    <property type="entry name" value="P-loop_NTPase"/>
</dbReference>
<dbReference type="NCBIfam" id="TIGR03598">
    <property type="entry name" value="GTPase_YsxC"/>
    <property type="match status" value="1"/>
</dbReference>
<dbReference type="PANTHER" id="PTHR11649:SF13">
    <property type="entry name" value="ENGB-TYPE G DOMAIN-CONTAINING PROTEIN"/>
    <property type="match status" value="1"/>
</dbReference>
<dbReference type="PANTHER" id="PTHR11649">
    <property type="entry name" value="MSS1/TRME-RELATED GTP-BINDING PROTEIN"/>
    <property type="match status" value="1"/>
</dbReference>
<dbReference type="Pfam" id="PF01926">
    <property type="entry name" value="MMR_HSR1"/>
    <property type="match status" value="1"/>
</dbReference>
<dbReference type="SUPFAM" id="SSF52540">
    <property type="entry name" value="P-loop containing nucleoside triphosphate hydrolases"/>
    <property type="match status" value="1"/>
</dbReference>
<dbReference type="PROSITE" id="PS51706">
    <property type="entry name" value="G_ENGB"/>
    <property type="match status" value="1"/>
</dbReference>
<proteinExistence type="inferred from homology"/>
<accession>Q92BF6</accession>
<feature type="chain" id="PRO_0000157760" description="Probable GTP-binding protein EngB">
    <location>
        <begin position="1"/>
        <end position="194"/>
    </location>
</feature>
<feature type="domain" description="EngB-type G" evidence="1">
    <location>
        <begin position="22"/>
        <end position="194"/>
    </location>
</feature>
<feature type="binding site" evidence="1">
    <location>
        <begin position="30"/>
        <end position="37"/>
    </location>
    <ligand>
        <name>GTP</name>
        <dbReference type="ChEBI" id="CHEBI:37565"/>
    </ligand>
</feature>
<feature type="binding site" evidence="1">
    <location>
        <position position="37"/>
    </location>
    <ligand>
        <name>Mg(2+)</name>
        <dbReference type="ChEBI" id="CHEBI:18420"/>
    </ligand>
</feature>
<feature type="binding site" evidence="1">
    <location>
        <begin position="57"/>
        <end position="61"/>
    </location>
    <ligand>
        <name>GTP</name>
        <dbReference type="ChEBI" id="CHEBI:37565"/>
    </ligand>
</feature>
<feature type="binding site" evidence="1">
    <location>
        <position position="59"/>
    </location>
    <ligand>
        <name>Mg(2+)</name>
        <dbReference type="ChEBI" id="CHEBI:18420"/>
    </ligand>
</feature>
<feature type="binding site" evidence="1">
    <location>
        <begin position="75"/>
        <end position="78"/>
    </location>
    <ligand>
        <name>GTP</name>
        <dbReference type="ChEBI" id="CHEBI:37565"/>
    </ligand>
</feature>
<feature type="binding site" evidence="1">
    <location>
        <begin position="142"/>
        <end position="145"/>
    </location>
    <ligand>
        <name>GTP</name>
        <dbReference type="ChEBI" id="CHEBI:37565"/>
    </ligand>
</feature>
<feature type="binding site" evidence="1">
    <location>
        <begin position="174"/>
        <end position="176"/>
    </location>
    <ligand>
        <name>GTP</name>
        <dbReference type="ChEBI" id="CHEBI:37565"/>
    </ligand>
</feature>
<protein>
    <recommendedName>
        <fullName evidence="1">Probable GTP-binding protein EngB</fullName>
    </recommendedName>
</protein>
<organism>
    <name type="scientific">Listeria innocua serovar 6a (strain ATCC BAA-680 / CLIP 11262)</name>
    <dbReference type="NCBI Taxonomy" id="272626"/>
    <lineage>
        <taxon>Bacteria</taxon>
        <taxon>Bacillati</taxon>
        <taxon>Bacillota</taxon>
        <taxon>Bacilli</taxon>
        <taxon>Bacillales</taxon>
        <taxon>Listeriaceae</taxon>
        <taxon>Listeria</taxon>
    </lineage>
</organism>
<sequence length="194" mass="22593">MDVNNVELVISAVRPEQYPETDLPEYALAGRSNVGKSSFINTMIRRKSMARISQKPGKTQTLNFYKIEEALFFVDVPGYGFAKVSKTEREKWGVMIETYITSREQLRGVIQIVDLRHKPTEDDRMMYEFLKYYDIPVIVVATKADKIPRSKWQKNAKIVRETLDFDPDDKFVLFSSETKMGKDEAWQFIKEGME</sequence>
<gene>
    <name evidence="1" type="primary">engB</name>
    <name type="ordered locus">lin1593</name>
</gene>
<reference key="1">
    <citation type="journal article" date="2001" name="Science">
        <title>Comparative genomics of Listeria species.</title>
        <authorList>
            <person name="Glaser P."/>
            <person name="Frangeul L."/>
            <person name="Buchrieser C."/>
            <person name="Rusniok C."/>
            <person name="Amend A."/>
            <person name="Baquero F."/>
            <person name="Berche P."/>
            <person name="Bloecker H."/>
            <person name="Brandt P."/>
            <person name="Chakraborty T."/>
            <person name="Charbit A."/>
            <person name="Chetouani F."/>
            <person name="Couve E."/>
            <person name="de Daruvar A."/>
            <person name="Dehoux P."/>
            <person name="Domann E."/>
            <person name="Dominguez-Bernal G."/>
            <person name="Duchaud E."/>
            <person name="Durant L."/>
            <person name="Dussurget O."/>
            <person name="Entian K.-D."/>
            <person name="Fsihi H."/>
            <person name="Garcia-del Portillo F."/>
            <person name="Garrido P."/>
            <person name="Gautier L."/>
            <person name="Goebel W."/>
            <person name="Gomez-Lopez N."/>
            <person name="Hain T."/>
            <person name="Hauf J."/>
            <person name="Jackson D."/>
            <person name="Jones L.-M."/>
            <person name="Kaerst U."/>
            <person name="Kreft J."/>
            <person name="Kuhn M."/>
            <person name="Kunst F."/>
            <person name="Kurapkat G."/>
            <person name="Madueno E."/>
            <person name="Maitournam A."/>
            <person name="Mata Vicente J."/>
            <person name="Ng E."/>
            <person name="Nedjari H."/>
            <person name="Nordsiek G."/>
            <person name="Novella S."/>
            <person name="de Pablos B."/>
            <person name="Perez-Diaz J.-C."/>
            <person name="Purcell R."/>
            <person name="Remmel B."/>
            <person name="Rose M."/>
            <person name="Schlueter T."/>
            <person name="Simoes N."/>
            <person name="Tierrez A."/>
            <person name="Vazquez-Boland J.-A."/>
            <person name="Voss H."/>
            <person name="Wehland J."/>
            <person name="Cossart P."/>
        </authorList>
    </citation>
    <scope>NUCLEOTIDE SEQUENCE [LARGE SCALE GENOMIC DNA]</scope>
    <source>
        <strain>ATCC BAA-680 / CLIP 11262</strain>
    </source>
</reference>
<name>ENGB_LISIN</name>
<keyword id="KW-0131">Cell cycle</keyword>
<keyword id="KW-0132">Cell division</keyword>
<keyword id="KW-0342">GTP-binding</keyword>
<keyword id="KW-0460">Magnesium</keyword>
<keyword id="KW-0479">Metal-binding</keyword>
<keyword id="KW-0547">Nucleotide-binding</keyword>
<keyword id="KW-0717">Septation</keyword>